<reference key="1">
    <citation type="journal article" date="2011" name="Proc. Natl. Acad. Sci. U.S.A.">
        <title>Genomic anatomy of Escherichia coli O157:H7 outbreaks.</title>
        <authorList>
            <person name="Eppinger M."/>
            <person name="Mammel M.K."/>
            <person name="Leclerc J.E."/>
            <person name="Ravel J."/>
            <person name="Cebula T.A."/>
        </authorList>
    </citation>
    <scope>NUCLEOTIDE SEQUENCE [LARGE SCALE GENOMIC DNA]</scope>
    <source>
        <strain>EC4115 / EHEC</strain>
    </source>
</reference>
<sequence length="168" mass="18654">MVEDILAPGLRVVFCGINPGLSSAGTGFPFAHPANRFWKVIYQAGFTDHQLKPQEAQHLLDYRCGVTKLVDRPTVQANEISKQELHAGGRKLIEKIEDYQPQALAILGKQAYEQGFSQRGAQWGKQTLSIGSTQIWVLPNPSGLSRVSLEKLVEAYRELDQALVVRGR</sequence>
<feature type="chain" id="PRO_1000188952" description="G/U mismatch-specific DNA glycosylase">
    <location>
        <begin position="1"/>
        <end position="168"/>
    </location>
</feature>
<organism>
    <name type="scientific">Escherichia coli O157:H7 (strain EC4115 / EHEC)</name>
    <dbReference type="NCBI Taxonomy" id="444450"/>
    <lineage>
        <taxon>Bacteria</taxon>
        <taxon>Pseudomonadati</taxon>
        <taxon>Pseudomonadota</taxon>
        <taxon>Gammaproteobacteria</taxon>
        <taxon>Enterobacterales</taxon>
        <taxon>Enterobacteriaceae</taxon>
        <taxon>Escherichia</taxon>
    </lineage>
</organism>
<gene>
    <name evidence="1" type="primary">mug</name>
    <name type="ordered locus">ECH74115_4381</name>
</gene>
<proteinExistence type="inferred from homology"/>
<protein>
    <recommendedName>
        <fullName evidence="1">G/U mismatch-specific DNA glycosylase</fullName>
        <ecNumber evidence="1">3.2.2.28</ecNumber>
    </recommendedName>
    <alternativeName>
        <fullName evidence="1">Double-strand-specific uracil glycosylase</fullName>
    </alternativeName>
    <alternativeName>
        <fullName evidence="1">Mismatch-specific uracil DNA-glycosylase</fullName>
        <shortName evidence="1">MUG</shortName>
    </alternativeName>
</protein>
<comment type="function">
    <text evidence="1">Excises ethenocytosine and uracil, which can arise by alkylation or deamination of cytosine, respectively, from the corresponding mispairs with guanine in ds-DNA. It is capable of hydrolyzing the carbon-nitrogen bond between the sugar-phosphate backbone of the DNA and the mispaired base. The complementary strand guanine functions in substrate recognition. Required for DNA damage lesion repair in stationary-phase cells.</text>
</comment>
<comment type="catalytic activity">
    <reaction evidence="1">
        <text>Specifically hydrolyzes mismatched double-stranded DNA and polynucleotides, releasing free uracil.</text>
        <dbReference type="EC" id="3.2.2.28"/>
    </reaction>
</comment>
<comment type="subunit">
    <text evidence="1">Binds DNA as a monomer.</text>
</comment>
<comment type="subcellular location">
    <subcellularLocation>
        <location evidence="1">Cytoplasm</location>
    </subcellularLocation>
</comment>
<comment type="similarity">
    <text evidence="1">Belongs to the uracil-DNA glycosylase (UDG) superfamily. TDG/mug family.</text>
</comment>
<keyword id="KW-0963">Cytoplasm</keyword>
<keyword id="KW-0227">DNA damage</keyword>
<keyword id="KW-0228">DNA excision</keyword>
<keyword id="KW-0234">DNA repair</keyword>
<keyword id="KW-0238">DNA-binding</keyword>
<keyword id="KW-0378">Hydrolase</keyword>
<evidence type="ECO:0000255" key="1">
    <source>
        <dbReference type="HAMAP-Rule" id="MF_01956"/>
    </source>
</evidence>
<name>MUG_ECO5E</name>
<accession>B5YRA8</accession>
<dbReference type="EC" id="3.2.2.28" evidence="1"/>
<dbReference type="EMBL" id="CP001164">
    <property type="protein sequence ID" value="ACI39046.1"/>
    <property type="molecule type" value="Genomic_DNA"/>
</dbReference>
<dbReference type="RefSeq" id="WP_000228926.1">
    <property type="nucleotide sequence ID" value="NC_011353.1"/>
</dbReference>
<dbReference type="SMR" id="B5YRA8"/>
<dbReference type="KEGG" id="ecf:ECH74115_4381"/>
<dbReference type="HOGENOM" id="CLU_042829_3_1_6"/>
<dbReference type="GO" id="GO:0005737">
    <property type="term" value="C:cytoplasm"/>
    <property type="evidence" value="ECO:0007669"/>
    <property type="project" value="UniProtKB-SubCell"/>
</dbReference>
<dbReference type="GO" id="GO:0003677">
    <property type="term" value="F:DNA binding"/>
    <property type="evidence" value="ECO:0007669"/>
    <property type="project" value="UniProtKB-KW"/>
</dbReference>
<dbReference type="GO" id="GO:0008263">
    <property type="term" value="F:pyrimidine-specific mismatch base pair DNA N-glycosylase activity"/>
    <property type="evidence" value="ECO:0007669"/>
    <property type="project" value="UniProtKB-UniRule"/>
</dbReference>
<dbReference type="GO" id="GO:0004844">
    <property type="term" value="F:uracil DNA N-glycosylase activity"/>
    <property type="evidence" value="ECO:0007669"/>
    <property type="project" value="TreeGrafter"/>
</dbReference>
<dbReference type="GO" id="GO:0006285">
    <property type="term" value="P:base-excision repair, AP site formation"/>
    <property type="evidence" value="ECO:0007669"/>
    <property type="project" value="UniProtKB-UniRule"/>
</dbReference>
<dbReference type="CDD" id="cd10028">
    <property type="entry name" value="UDG-F2_TDG_MUG"/>
    <property type="match status" value="1"/>
</dbReference>
<dbReference type="FunFam" id="3.40.470.10:FF:000003">
    <property type="entry name" value="G/U mismatch-specific DNA glycosylase"/>
    <property type="match status" value="1"/>
</dbReference>
<dbReference type="Gene3D" id="3.40.470.10">
    <property type="entry name" value="Uracil-DNA glycosylase-like domain"/>
    <property type="match status" value="1"/>
</dbReference>
<dbReference type="HAMAP" id="MF_01956">
    <property type="entry name" value="MUG"/>
    <property type="match status" value="1"/>
</dbReference>
<dbReference type="InterPro" id="IPR015637">
    <property type="entry name" value="MUG/TDG"/>
</dbReference>
<dbReference type="InterPro" id="IPR023502">
    <property type="entry name" value="MUG_bact"/>
</dbReference>
<dbReference type="InterPro" id="IPR005122">
    <property type="entry name" value="Uracil-DNA_glycosylase-like"/>
</dbReference>
<dbReference type="InterPro" id="IPR036895">
    <property type="entry name" value="Uracil-DNA_glycosylase-like_sf"/>
</dbReference>
<dbReference type="NCBIfam" id="NF007570">
    <property type="entry name" value="PRK10201.1"/>
    <property type="match status" value="1"/>
</dbReference>
<dbReference type="PANTHER" id="PTHR12159">
    <property type="entry name" value="G/T AND G/U MISMATCH-SPECIFIC DNA GLYCOSYLASE"/>
    <property type="match status" value="1"/>
</dbReference>
<dbReference type="PANTHER" id="PTHR12159:SF9">
    <property type="entry name" value="G_T MISMATCH-SPECIFIC THYMINE DNA GLYCOSYLASE"/>
    <property type="match status" value="1"/>
</dbReference>
<dbReference type="Pfam" id="PF03167">
    <property type="entry name" value="UDG"/>
    <property type="match status" value="1"/>
</dbReference>
<dbReference type="SUPFAM" id="SSF52141">
    <property type="entry name" value="Uracil-DNA glycosylase-like"/>
    <property type="match status" value="1"/>
</dbReference>